<keyword id="KW-0056">Arginine metabolism</keyword>
<keyword id="KW-0520">NAD</keyword>
<keyword id="KW-0560">Oxidoreductase</keyword>
<keyword id="KW-1185">Reference proteome</keyword>
<reference key="1">
    <citation type="journal article" date="2001" name="Proc. Natl. Acad. Sci. U.S.A.">
        <title>Complete genome sequence of Caulobacter crescentus.</title>
        <authorList>
            <person name="Nierman W.C."/>
            <person name="Feldblyum T.V."/>
            <person name="Laub M.T."/>
            <person name="Paulsen I.T."/>
            <person name="Nelson K.E."/>
            <person name="Eisen J.A."/>
            <person name="Heidelberg J.F."/>
            <person name="Alley M.R.K."/>
            <person name="Ohta N."/>
            <person name="Maddock J.R."/>
            <person name="Potocka I."/>
            <person name="Nelson W.C."/>
            <person name="Newton A."/>
            <person name="Stephens C."/>
            <person name="Phadke N.D."/>
            <person name="Ely B."/>
            <person name="DeBoy R.T."/>
            <person name="Dodson R.J."/>
            <person name="Durkin A.S."/>
            <person name="Gwinn M.L."/>
            <person name="Haft D.H."/>
            <person name="Kolonay J.F."/>
            <person name="Smit J."/>
            <person name="Craven M.B."/>
            <person name="Khouri H.M."/>
            <person name="Shetty J."/>
            <person name="Berry K.J."/>
            <person name="Utterback T.R."/>
            <person name="Tran K."/>
            <person name="Wolf A.M."/>
            <person name="Vamathevan J.J."/>
            <person name="Ermolaeva M.D."/>
            <person name="White O."/>
            <person name="Salzberg S.L."/>
            <person name="Venter J.C."/>
            <person name="Shapiro L."/>
            <person name="Fraser C.M."/>
        </authorList>
    </citation>
    <scope>NUCLEOTIDE SEQUENCE [LARGE SCALE GENOMIC DNA]</scope>
    <source>
        <strain>ATCC 19089 / CIP 103742 / CB 15</strain>
    </source>
</reference>
<protein>
    <recommendedName>
        <fullName evidence="1">N-succinylglutamate 5-semialdehyde dehydrogenase 1</fullName>
        <ecNumber evidence="1">1.2.1.71</ecNumber>
    </recommendedName>
    <alternativeName>
        <fullName evidence="1">Succinylglutamic semialdehyde dehydrogenase 1</fullName>
        <shortName evidence="1">SGSD 1</shortName>
    </alternativeName>
</protein>
<gene>
    <name evidence="1" type="primary">astD1</name>
    <name type="ordered locus">CC_0582</name>
</gene>
<proteinExistence type="inferred from homology"/>
<comment type="function">
    <text evidence="1">Catalyzes the NAD-dependent reduction of succinylglutamate semialdehyde into succinylglutamate.</text>
</comment>
<comment type="catalytic activity">
    <reaction evidence="1">
        <text>N-succinyl-L-glutamate 5-semialdehyde + NAD(+) + H2O = N-succinyl-L-glutamate + NADH + 2 H(+)</text>
        <dbReference type="Rhea" id="RHEA:10812"/>
        <dbReference type="ChEBI" id="CHEBI:15377"/>
        <dbReference type="ChEBI" id="CHEBI:15378"/>
        <dbReference type="ChEBI" id="CHEBI:57540"/>
        <dbReference type="ChEBI" id="CHEBI:57945"/>
        <dbReference type="ChEBI" id="CHEBI:58520"/>
        <dbReference type="ChEBI" id="CHEBI:58763"/>
        <dbReference type="EC" id="1.2.1.71"/>
    </reaction>
</comment>
<comment type="pathway">
    <text evidence="1">Amino-acid degradation; L-arginine degradation via AST pathway; L-glutamate and succinate from L-arginine: step 4/5.</text>
</comment>
<comment type="similarity">
    <text evidence="1">Belongs to the aldehyde dehydrogenase family. AstD subfamily.</text>
</comment>
<sequence>MSASRLISRDPYTGEAIADFAVNDARSIDAACHSARAAFAEWAMTPLAERRAIALRFAETVRARREEIATLIARETGKPMWEALTEADSVAAKVAISIRAQDERAGERSEPMADATARLAHRPHGVLAVIGPFNFPMHLANGHIVPALLAGNAVVFKPSEKTPACGQLMGELWRAAGLPDHVLTIVIGGGEAGEALVRHEALDGVLFTGGVQAGRAIHRALADAPHKILALELGGNAPLVVWDVADIEAAAHLIVQSAYVTAGQRCTCARRLILPEGARGDALLEALTMLMDRLVIGGPFQSPAPFMGPVIDAHAAAQVLAAQDRMTADGGRPLRLAAVREARSALLSPGLIELTDAPLRDEEIFGPLLQVRRAADFDAALALANATRFGLAAGLISDDEALYRRFWTSVRAGIVNWNRPTTGASSAAPFGGVGGSGNHRPSAYYAADYSAYPVAGLESPSPVYRLPIGLNP</sequence>
<evidence type="ECO:0000255" key="1">
    <source>
        <dbReference type="HAMAP-Rule" id="MF_01174"/>
    </source>
</evidence>
<feature type="chain" id="PRO_0000262394" description="N-succinylglutamate 5-semialdehyde dehydrogenase 1">
    <location>
        <begin position="1"/>
        <end position="472"/>
    </location>
</feature>
<feature type="active site" evidence="1">
    <location>
        <position position="232"/>
    </location>
</feature>
<feature type="active site" evidence="1">
    <location>
        <position position="266"/>
    </location>
</feature>
<feature type="binding site" evidence="1">
    <location>
        <begin position="209"/>
        <end position="214"/>
    </location>
    <ligand>
        <name>NAD(+)</name>
        <dbReference type="ChEBI" id="CHEBI:57540"/>
    </ligand>
</feature>
<dbReference type="EC" id="1.2.1.71" evidence="1"/>
<dbReference type="EMBL" id="AE005673">
    <property type="protein sequence ID" value="AAK22568.1"/>
    <property type="molecule type" value="Genomic_DNA"/>
</dbReference>
<dbReference type="PIR" id="D87321">
    <property type="entry name" value="D87321"/>
</dbReference>
<dbReference type="RefSeq" id="NP_419400.1">
    <property type="nucleotide sequence ID" value="NC_002696.2"/>
</dbReference>
<dbReference type="RefSeq" id="WP_010918469.1">
    <property type="nucleotide sequence ID" value="NC_002696.2"/>
</dbReference>
<dbReference type="SMR" id="Q9AAL5"/>
<dbReference type="STRING" id="190650.CC_0582"/>
<dbReference type="EnsemblBacteria" id="AAK22568">
    <property type="protein sequence ID" value="AAK22568"/>
    <property type="gene ID" value="CC_0582"/>
</dbReference>
<dbReference type="KEGG" id="ccr:CC_0582"/>
<dbReference type="PATRIC" id="fig|190650.5.peg.594"/>
<dbReference type="eggNOG" id="COG1012">
    <property type="taxonomic scope" value="Bacteria"/>
</dbReference>
<dbReference type="HOGENOM" id="CLU_005391_1_0_5"/>
<dbReference type="BioCyc" id="CAULO:CC0582-MONOMER"/>
<dbReference type="UniPathway" id="UPA00185">
    <property type="reaction ID" value="UER00282"/>
</dbReference>
<dbReference type="Proteomes" id="UP000001816">
    <property type="component" value="Chromosome"/>
</dbReference>
<dbReference type="GO" id="GO:0043824">
    <property type="term" value="F:succinylglutamate-semialdehyde dehydrogenase activity"/>
    <property type="evidence" value="ECO:0007669"/>
    <property type="project" value="UniProtKB-EC"/>
</dbReference>
<dbReference type="GO" id="GO:0019544">
    <property type="term" value="P:arginine catabolic process to glutamate"/>
    <property type="evidence" value="ECO:0007669"/>
    <property type="project" value="UniProtKB-UniRule"/>
</dbReference>
<dbReference type="GO" id="GO:0019545">
    <property type="term" value="P:arginine catabolic process to succinate"/>
    <property type="evidence" value="ECO:0007669"/>
    <property type="project" value="UniProtKB-UniRule"/>
</dbReference>
<dbReference type="CDD" id="cd07095">
    <property type="entry name" value="ALDH_SGSD_AstD"/>
    <property type="match status" value="1"/>
</dbReference>
<dbReference type="FunFam" id="3.40.605.10:FF:000010">
    <property type="entry name" value="N-succinylglutamate 5-semialdehyde dehydrogenase"/>
    <property type="match status" value="1"/>
</dbReference>
<dbReference type="Gene3D" id="3.40.605.10">
    <property type="entry name" value="Aldehyde Dehydrogenase, Chain A, domain 1"/>
    <property type="match status" value="1"/>
</dbReference>
<dbReference type="Gene3D" id="3.40.309.10">
    <property type="entry name" value="Aldehyde Dehydrogenase, Chain A, domain 2"/>
    <property type="match status" value="1"/>
</dbReference>
<dbReference type="HAMAP" id="MF_01174">
    <property type="entry name" value="Aldedh_AstD"/>
    <property type="match status" value="1"/>
</dbReference>
<dbReference type="InterPro" id="IPR016161">
    <property type="entry name" value="Ald_DH/histidinol_DH"/>
</dbReference>
<dbReference type="InterPro" id="IPR016163">
    <property type="entry name" value="Ald_DH_C"/>
</dbReference>
<dbReference type="InterPro" id="IPR016160">
    <property type="entry name" value="Ald_DH_CS_CYS"/>
</dbReference>
<dbReference type="InterPro" id="IPR029510">
    <property type="entry name" value="Ald_DH_CS_GLU"/>
</dbReference>
<dbReference type="InterPro" id="IPR016162">
    <property type="entry name" value="Ald_DH_N"/>
</dbReference>
<dbReference type="InterPro" id="IPR015590">
    <property type="entry name" value="Aldehyde_DH_dom"/>
</dbReference>
<dbReference type="InterPro" id="IPR017649">
    <property type="entry name" value="SuccinylGlu_semiald_DH_AstD"/>
</dbReference>
<dbReference type="NCBIfam" id="TIGR03240">
    <property type="entry name" value="arg_catab_astD"/>
    <property type="match status" value="1"/>
</dbReference>
<dbReference type="NCBIfam" id="NF006992">
    <property type="entry name" value="PRK09457.1"/>
    <property type="match status" value="1"/>
</dbReference>
<dbReference type="PANTHER" id="PTHR11699">
    <property type="entry name" value="ALDEHYDE DEHYDROGENASE-RELATED"/>
    <property type="match status" value="1"/>
</dbReference>
<dbReference type="Pfam" id="PF00171">
    <property type="entry name" value="Aldedh"/>
    <property type="match status" value="1"/>
</dbReference>
<dbReference type="SUPFAM" id="SSF53720">
    <property type="entry name" value="ALDH-like"/>
    <property type="match status" value="1"/>
</dbReference>
<dbReference type="PROSITE" id="PS00070">
    <property type="entry name" value="ALDEHYDE_DEHYDR_CYS"/>
    <property type="match status" value="1"/>
</dbReference>
<dbReference type="PROSITE" id="PS00687">
    <property type="entry name" value="ALDEHYDE_DEHYDR_GLU"/>
    <property type="match status" value="1"/>
</dbReference>
<accession>Q9AAL5</accession>
<organism>
    <name type="scientific">Caulobacter vibrioides (strain ATCC 19089 / CIP 103742 / CB 15)</name>
    <name type="common">Caulobacter crescentus</name>
    <dbReference type="NCBI Taxonomy" id="190650"/>
    <lineage>
        <taxon>Bacteria</taxon>
        <taxon>Pseudomonadati</taxon>
        <taxon>Pseudomonadota</taxon>
        <taxon>Alphaproteobacteria</taxon>
        <taxon>Caulobacterales</taxon>
        <taxon>Caulobacteraceae</taxon>
        <taxon>Caulobacter</taxon>
    </lineage>
</organism>
<name>ASTD1_CAUVC</name>